<sequence length="316" mass="34474">MNVQIGIDLMGGDHSPLVIWEVLIDVLNSTASNSHFSFTAFASHEVQEQILSSCTYKECPKIIASDSFVTMDDSPLSAIRKKSSSMALGLDYLKEDKIDAFISTGNTAALITLSRTKIPVFPTVRRPALLVRVPTMRGCAVILDVGANVSVNPEEMLGFARMGLAYRQCIGEKEHPTIGLLNIGSEERKGTEAHRQTFRILRETFQDSFLGNIESGDVFSGSVDIVVADGFTGNIFLKTAEGVFDFLRHILGDKLESDVKRQLDYTIYPGSMVCGLSKLVIKCHGKACGRSLFNGISGSIDLARARVCQRILSSLS</sequence>
<feature type="chain" id="PRO_0000329214" description="Phosphate acyltransferase">
    <location>
        <begin position="1"/>
        <end position="316"/>
    </location>
</feature>
<evidence type="ECO:0000255" key="1">
    <source>
        <dbReference type="HAMAP-Rule" id="MF_00019"/>
    </source>
</evidence>
<organism>
    <name type="scientific">Chlamydia felis (strain Fe/C-56)</name>
    <name type="common">Chlamydophila felis</name>
    <dbReference type="NCBI Taxonomy" id="264202"/>
    <lineage>
        <taxon>Bacteria</taxon>
        <taxon>Pseudomonadati</taxon>
        <taxon>Chlamydiota</taxon>
        <taxon>Chlamydiia</taxon>
        <taxon>Chlamydiales</taxon>
        <taxon>Chlamydiaceae</taxon>
        <taxon>Chlamydia/Chlamydophila group</taxon>
        <taxon>Chlamydia</taxon>
    </lineage>
</organism>
<proteinExistence type="inferred from homology"/>
<name>PLSX_CHLFF</name>
<reference key="1">
    <citation type="journal article" date="2006" name="DNA Res.">
        <title>Genome sequence of the cat pathogen, Chlamydophila felis.</title>
        <authorList>
            <person name="Azuma Y."/>
            <person name="Hirakawa H."/>
            <person name="Yamashita A."/>
            <person name="Cai Y."/>
            <person name="Rahman M.A."/>
            <person name="Suzuki H."/>
            <person name="Mitaku S."/>
            <person name="Toh H."/>
            <person name="Goto S."/>
            <person name="Murakami T."/>
            <person name="Sugi K."/>
            <person name="Hayashi H."/>
            <person name="Fukushi H."/>
            <person name="Hattori M."/>
            <person name="Kuhara S."/>
            <person name="Shirai M."/>
        </authorList>
    </citation>
    <scope>NUCLEOTIDE SEQUENCE [LARGE SCALE GENOMIC DNA]</scope>
    <source>
        <strain>Fe/C-56</strain>
    </source>
</reference>
<dbReference type="EC" id="2.3.1.274" evidence="1"/>
<dbReference type="EMBL" id="AP006861">
    <property type="protein sequence ID" value="BAE80980.1"/>
    <property type="molecule type" value="Genomic_DNA"/>
</dbReference>
<dbReference type="RefSeq" id="WP_011457762.1">
    <property type="nucleotide sequence ID" value="NC_007899.1"/>
</dbReference>
<dbReference type="SMR" id="Q255Q8"/>
<dbReference type="STRING" id="264202.CF0208"/>
<dbReference type="KEGG" id="cfe:CF0208"/>
<dbReference type="eggNOG" id="COG0416">
    <property type="taxonomic scope" value="Bacteria"/>
</dbReference>
<dbReference type="HOGENOM" id="CLU_039379_1_1_0"/>
<dbReference type="OrthoDB" id="9806408at2"/>
<dbReference type="UniPathway" id="UPA00085"/>
<dbReference type="Proteomes" id="UP000001260">
    <property type="component" value="Chromosome"/>
</dbReference>
<dbReference type="GO" id="GO:0005737">
    <property type="term" value="C:cytoplasm"/>
    <property type="evidence" value="ECO:0007669"/>
    <property type="project" value="UniProtKB-SubCell"/>
</dbReference>
<dbReference type="GO" id="GO:0043811">
    <property type="term" value="F:phosphate:acyl-[acyl carrier protein] acyltransferase activity"/>
    <property type="evidence" value="ECO:0007669"/>
    <property type="project" value="UniProtKB-UniRule"/>
</dbReference>
<dbReference type="GO" id="GO:0006633">
    <property type="term" value="P:fatty acid biosynthetic process"/>
    <property type="evidence" value="ECO:0007669"/>
    <property type="project" value="UniProtKB-UniRule"/>
</dbReference>
<dbReference type="GO" id="GO:0008654">
    <property type="term" value="P:phospholipid biosynthetic process"/>
    <property type="evidence" value="ECO:0007669"/>
    <property type="project" value="UniProtKB-KW"/>
</dbReference>
<dbReference type="Gene3D" id="3.40.718.10">
    <property type="entry name" value="Isopropylmalate Dehydrogenase"/>
    <property type="match status" value="1"/>
</dbReference>
<dbReference type="HAMAP" id="MF_00019">
    <property type="entry name" value="PlsX"/>
    <property type="match status" value="1"/>
</dbReference>
<dbReference type="InterPro" id="IPR003664">
    <property type="entry name" value="FA_synthesis"/>
</dbReference>
<dbReference type="InterPro" id="IPR012281">
    <property type="entry name" value="Phospholipid_synth_PlsX-like"/>
</dbReference>
<dbReference type="NCBIfam" id="TIGR00182">
    <property type="entry name" value="plsX"/>
    <property type="match status" value="1"/>
</dbReference>
<dbReference type="NCBIfam" id="NF010420">
    <property type="entry name" value="PRK13846.1"/>
    <property type="match status" value="1"/>
</dbReference>
<dbReference type="PANTHER" id="PTHR30100">
    <property type="entry name" value="FATTY ACID/PHOSPHOLIPID SYNTHESIS PROTEIN PLSX"/>
    <property type="match status" value="1"/>
</dbReference>
<dbReference type="PANTHER" id="PTHR30100:SF1">
    <property type="entry name" value="PHOSPHATE ACYLTRANSFERASE"/>
    <property type="match status" value="1"/>
</dbReference>
<dbReference type="Pfam" id="PF02504">
    <property type="entry name" value="FA_synthesis"/>
    <property type="match status" value="1"/>
</dbReference>
<dbReference type="PIRSF" id="PIRSF002465">
    <property type="entry name" value="Phsphlp_syn_PlsX"/>
    <property type="match status" value="1"/>
</dbReference>
<dbReference type="SUPFAM" id="SSF53659">
    <property type="entry name" value="Isocitrate/Isopropylmalate dehydrogenase-like"/>
    <property type="match status" value="1"/>
</dbReference>
<accession>Q255Q8</accession>
<keyword id="KW-0963">Cytoplasm</keyword>
<keyword id="KW-0444">Lipid biosynthesis</keyword>
<keyword id="KW-0443">Lipid metabolism</keyword>
<keyword id="KW-0594">Phospholipid biosynthesis</keyword>
<keyword id="KW-1208">Phospholipid metabolism</keyword>
<keyword id="KW-0808">Transferase</keyword>
<gene>
    <name evidence="1" type="primary">plsX</name>
    <name type="ordered locus">CF0208</name>
</gene>
<comment type="function">
    <text evidence="1">Catalyzes the reversible formation of acyl-phosphate (acyl-PO(4)) from acyl-[acyl-carrier-protein] (acyl-ACP). This enzyme utilizes acyl-ACP as fatty acyl donor, but not acyl-CoA.</text>
</comment>
<comment type="catalytic activity">
    <reaction evidence="1">
        <text>a fatty acyl-[ACP] + phosphate = an acyl phosphate + holo-[ACP]</text>
        <dbReference type="Rhea" id="RHEA:42292"/>
        <dbReference type="Rhea" id="RHEA-COMP:9685"/>
        <dbReference type="Rhea" id="RHEA-COMP:14125"/>
        <dbReference type="ChEBI" id="CHEBI:43474"/>
        <dbReference type="ChEBI" id="CHEBI:59918"/>
        <dbReference type="ChEBI" id="CHEBI:64479"/>
        <dbReference type="ChEBI" id="CHEBI:138651"/>
        <dbReference type="EC" id="2.3.1.274"/>
    </reaction>
</comment>
<comment type="pathway">
    <text evidence="1">Lipid metabolism; phospholipid metabolism.</text>
</comment>
<comment type="subunit">
    <text evidence="1">Homodimer. Probably interacts with PlsY.</text>
</comment>
<comment type="subcellular location">
    <subcellularLocation>
        <location evidence="1">Cytoplasm</location>
    </subcellularLocation>
    <text evidence="1">Associated with the membrane possibly through PlsY.</text>
</comment>
<comment type="similarity">
    <text evidence="1">Belongs to the PlsX family.</text>
</comment>
<protein>
    <recommendedName>
        <fullName evidence="1">Phosphate acyltransferase</fullName>
        <ecNumber evidence="1">2.3.1.274</ecNumber>
    </recommendedName>
    <alternativeName>
        <fullName evidence="1">Acyl-ACP phosphotransacylase</fullName>
    </alternativeName>
    <alternativeName>
        <fullName evidence="1">Acyl-[acyl-carrier-protein]--phosphate acyltransferase</fullName>
    </alternativeName>
    <alternativeName>
        <fullName evidence="1">Phosphate-acyl-ACP acyltransferase</fullName>
    </alternativeName>
</protein>